<reference key="1">
    <citation type="journal article" date="2005" name="J. Bacteriol.">
        <title>Whole-genome sequence analysis of Pseudomonas syringae pv. phaseolicola 1448A reveals divergence among pathovars in genes involved in virulence and transposition.</title>
        <authorList>
            <person name="Joardar V."/>
            <person name="Lindeberg M."/>
            <person name="Jackson R.W."/>
            <person name="Selengut J."/>
            <person name="Dodson R."/>
            <person name="Brinkac L.M."/>
            <person name="Daugherty S.C."/>
            <person name="DeBoy R.T."/>
            <person name="Durkin A.S."/>
            <person name="Gwinn Giglio M."/>
            <person name="Madupu R."/>
            <person name="Nelson W.C."/>
            <person name="Rosovitz M.J."/>
            <person name="Sullivan S.A."/>
            <person name="Crabtree J."/>
            <person name="Creasy T."/>
            <person name="Davidsen T.M."/>
            <person name="Haft D.H."/>
            <person name="Zafar N."/>
            <person name="Zhou L."/>
            <person name="Halpin R."/>
            <person name="Holley T."/>
            <person name="Khouri H.M."/>
            <person name="Feldblyum T.V."/>
            <person name="White O."/>
            <person name="Fraser C.M."/>
            <person name="Chatterjee A.K."/>
            <person name="Cartinhour S."/>
            <person name="Schneider D."/>
            <person name="Mansfield J.W."/>
            <person name="Collmer A."/>
            <person name="Buell R."/>
        </authorList>
    </citation>
    <scope>NUCLEOTIDE SEQUENCE [LARGE SCALE GENOMIC DNA]</scope>
    <source>
        <strain>1448A / Race 6</strain>
    </source>
</reference>
<accession>Q48LV9</accession>
<proteinExistence type="inferred from homology"/>
<gene>
    <name evidence="1" type="primary">rimM</name>
    <name type="ordered locus">PSPPH_1355</name>
</gene>
<sequence length="179" mass="20101">MNATPASADDLIVIGKIYSVHGVRGEVKVFSFTDPIGNLLDYKTWTLRREGSVEKQVELVSGRLQSKFLVAKLKGLDDREEARLLSGYEICVPRNLFPDLDDGEYYWYQLEGLKVIDQLGQLLGKIDHLLETGSNDVMVVKPCAGSLDDRERLLPYTEQCVLAIDMAAGEMKVDWDADF</sequence>
<protein>
    <recommendedName>
        <fullName evidence="1">Ribosome maturation factor RimM</fullName>
    </recommendedName>
</protein>
<keyword id="KW-0143">Chaperone</keyword>
<keyword id="KW-0963">Cytoplasm</keyword>
<keyword id="KW-0690">Ribosome biogenesis</keyword>
<keyword id="KW-0698">rRNA processing</keyword>
<comment type="function">
    <text evidence="1">An accessory protein needed during the final step in the assembly of 30S ribosomal subunit, possibly for assembly of the head region. Essential for efficient processing of 16S rRNA. May be needed both before and after RbfA during the maturation of 16S rRNA. It has affinity for free ribosomal 30S subunits but not for 70S ribosomes.</text>
</comment>
<comment type="subunit">
    <text evidence="1">Binds ribosomal protein uS19.</text>
</comment>
<comment type="subcellular location">
    <subcellularLocation>
        <location evidence="1">Cytoplasm</location>
    </subcellularLocation>
</comment>
<comment type="domain">
    <text evidence="1">The PRC barrel domain binds ribosomal protein uS19.</text>
</comment>
<comment type="similarity">
    <text evidence="1">Belongs to the RimM family.</text>
</comment>
<name>RIMM_PSE14</name>
<evidence type="ECO:0000255" key="1">
    <source>
        <dbReference type="HAMAP-Rule" id="MF_00014"/>
    </source>
</evidence>
<dbReference type="EMBL" id="CP000058">
    <property type="protein sequence ID" value="AAZ33653.1"/>
    <property type="molecule type" value="Genomic_DNA"/>
</dbReference>
<dbReference type="RefSeq" id="WP_002552522.1">
    <property type="nucleotide sequence ID" value="NC_005773.3"/>
</dbReference>
<dbReference type="SMR" id="Q48LV9"/>
<dbReference type="GeneID" id="69858347"/>
<dbReference type="KEGG" id="psp:PSPPH_1355"/>
<dbReference type="eggNOG" id="COG0806">
    <property type="taxonomic scope" value="Bacteria"/>
</dbReference>
<dbReference type="HOGENOM" id="CLU_077636_1_0_6"/>
<dbReference type="Proteomes" id="UP000000551">
    <property type="component" value="Chromosome"/>
</dbReference>
<dbReference type="GO" id="GO:0005737">
    <property type="term" value="C:cytoplasm"/>
    <property type="evidence" value="ECO:0007669"/>
    <property type="project" value="UniProtKB-SubCell"/>
</dbReference>
<dbReference type="GO" id="GO:0005840">
    <property type="term" value="C:ribosome"/>
    <property type="evidence" value="ECO:0007669"/>
    <property type="project" value="InterPro"/>
</dbReference>
<dbReference type="GO" id="GO:0043022">
    <property type="term" value="F:ribosome binding"/>
    <property type="evidence" value="ECO:0007669"/>
    <property type="project" value="InterPro"/>
</dbReference>
<dbReference type="GO" id="GO:0042274">
    <property type="term" value="P:ribosomal small subunit biogenesis"/>
    <property type="evidence" value="ECO:0007669"/>
    <property type="project" value="UniProtKB-UniRule"/>
</dbReference>
<dbReference type="GO" id="GO:0006364">
    <property type="term" value="P:rRNA processing"/>
    <property type="evidence" value="ECO:0007669"/>
    <property type="project" value="UniProtKB-UniRule"/>
</dbReference>
<dbReference type="Gene3D" id="2.30.30.240">
    <property type="entry name" value="PRC-barrel domain"/>
    <property type="match status" value="1"/>
</dbReference>
<dbReference type="Gene3D" id="2.40.30.60">
    <property type="entry name" value="RimM"/>
    <property type="match status" value="1"/>
</dbReference>
<dbReference type="HAMAP" id="MF_00014">
    <property type="entry name" value="Ribosome_mat_RimM"/>
    <property type="match status" value="1"/>
</dbReference>
<dbReference type="InterPro" id="IPR011033">
    <property type="entry name" value="PRC_barrel-like_sf"/>
</dbReference>
<dbReference type="InterPro" id="IPR056792">
    <property type="entry name" value="PRC_RimM"/>
</dbReference>
<dbReference type="InterPro" id="IPR011961">
    <property type="entry name" value="RimM"/>
</dbReference>
<dbReference type="InterPro" id="IPR002676">
    <property type="entry name" value="RimM_N"/>
</dbReference>
<dbReference type="InterPro" id="IPR036976">
    <property type="entry name" value="RimM_N_sf"/>
</dbReference>
<dbReference type="InterPro" id="IPR009000">
    <property type="entry name" value="Transl_B-barrel_sf"/>
</dbReference>
<dbReference type="NCBIfam" id="TIGR02273">
    <property type="entry name" value="16S_RimM"/>
    <property type="match status" value="1"/>
</dbReference>
<dbReference type="PANTHER" id="PTHR33692">
    <property type="entry name" value="RIBOSOME MATURATION FACTOR RIMM"/>
    <property type="match status" value="1"/>
</dbReference>
<dbReference type="PANTHER" id="PTHR33692:SF1">
    <property type="entry name" value="RIBOSOME MATURATION FACTOR RIMM"/>
    <property type="match status" value="1"/>
</dbReference>
<dbReference type="Pfam" id="PF24986">
    <property type="entry name" value="PRC_RimM"/>
    <property type="match status" value="1"/>
</dbReference>
<dbReference type="Pfam" id="PF01782">
    <property type="entry name" value="RimM"/>
    <property type="match status" value="1"/>
</dbReference>
<dbReference type="SUPFAM" id="SSF50346">
    <property type="entry name" value="PRC-barrel domain"/>
    <property type="match status" value="1"/>
</dbReference>
<dbReference type="SUPFAM" id="SSF50447">
    <property type="entry name" value="Translation proteins"/>
    <property type="match status" value="1"/>
</dbReference>
<feature type="chain" id="PRO_0000244150" description="Ribosome maturation factor RimM">
    <location>
        <begin position="1"/>
        <end position="179"/>
    </location>
</feature>
<feature type="domain" description="PRC barrel" evidence="1">
    <location>
        <begin position="102"/>
        <end position="179"/>
    </location>
</feature>
<organism>
    <name type="scientific">Pseudomonas savastanoi pv. phaseolicola (strain 1448A / Race 6)</name>
    <name type="common">Pseudomonas syringae pv. phaseolicola (strain 1448A / Race 6)</name>
    <dbReference type="NCBI Taxonomy" id="264730"/>
    <lineage>
        <taxon>Bacteria</taxon>
        <taxon>Pseudomonadati</taxon>
        <taxon>Pseudomonadota</taxon>
        <taxon>Gammaproteobacteria</taxon>
        <taxon>Pseudomonadales</taxon>
        <taxon>Pseudomonadaceae</taxon>
        <taxon>Pseudomonas</taxon>
    </lineage>
</organism>